<evidence type="ECO:0000250" key="1">
    <source>
        <dbReference type="UniProtKB" id="P02070"/>
    </source>
</evidence>
<evidence type="ECO:0000255" key="2">
    <source>
        <dbReference type="PROSITE-ProRule" id="PRU00238"/>
    </source>
</evidence>
<evidence type="ECO:0000305" key="3"/>
<accession>P83114</accession>
<keyword id="KW-0903">Direct protein sequencing</keyword>
<keyword id="KW-0349">Heme</keyword>
<keyword id="KW-0408">Iron</keyword>
<keyword id="KW-0479">Metal-binding</keyword>
<keyword id="KW-0561">Oxygen transport</keyword>
<keyword id="KW-0813">Transport</keyword>
<proteinExistence type="evidence at protein level"/>
<sequence length="145" mass="16144">VHLTDQEIKYINAIWSKVDYKQVGGEALARLLIVYPWTQRYFSTFGNLASADAISHNSKVIAHGEKVLRSIGEALKHLDNLKGYAKLSQYHSEKLHVDPANFVRFGGVVVIVLAHHFHEEFTPEVQAAFEKAFGGVADAVGKGYH</sequence>
<dbReference type="SMR" id="P83114"/>
<dbReference type="GO" id="GO:0072562">
    <property type="term" value="C:blood microparticle"/>
    <property type="evidence" value="ECO:0007669"/>
    <property type="project" value="TreeGrafter"/>
</dbReference>
<dbReference type="GO" id="GO:0031838">
    <property type="term" value="C:haptoglobin-hemoglobin complex"/>
    <property type="evidence" value="ECO:0007669"/>
    <property type="project" value="TreeGrafter"/>
</dbReference>
<dbReference type="GO" id="GO:0005833">
    <property type="term" value="C:hemoglobin complex"/>
    <property type="evidence" value="ECO:0007669"/>
    <property type="project" value="InterPro"/>
</dbReference>
<dbReference type="GO" id="GO:0031720">
    <property type="term" value="F:haptoglobin binding"/>
    <property type="evidence" value="ECO:0007669"/>
    <property type="project" value="TreeGrafter"/>
</dbReference>
<dbReference type="GO" id="GO:0020037">
    <property type="term" value="F:heme binding"/>
    <property type="evidence" value="ECO:0007669"/>
    <property type="project" value="InterPro"/>
</dbReference>
<dbReference type="GO" id="GO:0046872">
    <property type="term" value="F:metal ion binding"/>
    <property type="evidence" value="ECO:0007669"/>
    <property type="project" value="UniProtKB-KW"/>
</dbReference>
<dbReference type="GO" id="GO:0043177">
    <property type="term" value="F:organic acid binding"/>
    <property type="evidence" value="ECO:0007669"/>
    <property type="project" value="TreeGrafter"/>
</dbReference>
<dbReference type="GO" id="GO:0019825">
    <property type="term" value="F:oxygen binding"/>
    <property type="evidence" value="ECO:0007669"/>
    <property type="project" value="InterPro"/>
</dbReference>
<dbReference type="GO" id="GO:0005344">
    <property type="term" value="F:oxygen carrier activity"/>
    <property type="evidence" value="ECO:0007669"/>
    <property type="project" value="UniProtKB-KW"/>
</dbReference>
<dbReference type="GO" id="GO:0004601">
    <property type="term" value="F:peroxidase activity"/>
    <property type="evidence" value="ECO:0007669"/>
    <property type="project" value="TreeGrafter"/>
</dbReference>
<dbReference type="GO" id="GO:0042744">
    <property type="term" value="P:hydrogen peroxide catabolic process"/>
    <property type="evidence" value="ECO:0007669"/>
    <property type="project" value="TreeGrafter"/>
</dbReference>
<dbReference type="CDD" id="cd08925">
    <property type="entry name" value="Hb-beta-like"/>
    <property type="match status" value="1"/>
</dbReference>
<dbReference type="FunFam" id="1.10.490.10:FF:000001">
    <property type="entry name" value="Hemoglobin subunit beta"/>
    <property type="match status" value="1"/>
</dbReference>
<dbReference type="Gene3D" id="1.10.490.10">
    <property type="entry name" value="Globins"/>
    <property type="match status" value="1"/>
</dbReference>
<dbReference type="InterPro" id="IPR000971">
    <property type="entry name" value="Globin"/>
</dbReference>
<dbReference type="InterPro" id="IPR009050">
    <property type="entry name" value="Globin-like_sf"/>
</dbReference>
<dbReference type="InterPro" id="IPR012292">
    <property type="entry name" value="Globin/Proto"/>
</dbReference>
<dbReference type="InterPro" id="IPR002337">
    <property type="entry name" value="Hemoglobin_b"/>
</dbReference>
<dbReference type="InterPro" id="IPR050056">
    <property type="entry name" value="Hemoglobin_oxygen_transport"/>
</dbReference>
<dbReference type="PANTHER" id="PTHR11442">
    <property type="entry name" value="HEMOGLOBIN FAMILY MEMBER"/>
    <property type="match status" value="1"/>
</dbReference>
<dbReference type="PANTHER" id="PTHR11442:SF100">
    <property type="entry name" value="HEMOGLOBIN SUBUNIT BETA-1"/>
    <property type="match status" value="1"/>
</dbReference>
<dbReference type="Pfam" id="PF00042">
    <property type="entry name" value="Globin"/>
    <property type="match status" value="1"/>
</dbReference>
<dbReference type="PRINTS" id="PR00814">
    <property type="entry name" value="BETAHAEM"/>
</dbReference>
<dbReference type="SUPFAM" id="SSF46458">
    <property type="entry name" value="Globin-like"/>
    <property type="match status" value="1"/>
</dbReference>
<dbReference type="PROSITE" id="PS01033">
    <property type="entry name" value="GLOBIN"/>
    <property type="match status" value="1"/>
</dbReference>
<organism evidence="3">
    <name type="scientific">Telmatobius peruvianus</name>
    <name type="common">Andean frog</name>
    <dbReference type="NCBI Taxonomy" id="170953"/>
    <lineage>
        <taxon>Eukaryota</taxon>
        <taxon>Metazoa</taxon>
        <taxon>Chordata</taxon>
        <taxon>Craniata</taxon>
        <taxon>Vertebrata</taxon>
        <taxon>Euteleostomi</taxon>
        <taxon>Amphibia</taxon>
        <taxon>Batrachia</taxon>
        <taxon>Anura</taxon>
        <taxon>Neobatrachia</taxon>
        <taxon>Hyloidea</taxon>
        <taxon>Ceratophryidae</taxon>
        <taxon>Telmatobiinae</taxon>
        <taxon>Telmatobius</taxon>
    </lineage>
</organism>
<name>HBB2_TELPE</name>
<reference evidence="3" key="1">
    <citation type="journal article" date="2002" name="Am. J. Physiol.">
        <title>Novel mechanism for high-altitude adaptation in hemoglobin of the Andean frog Telmatobius peruvianus.</title>
        <authorList>
            <person name="Weber R.E."/>
            <person name="Ostojic H."/>
            <person name="Fago A."/>
            <person name="Dewilde S."/>
            <person name="Van Hauwaert M.-L."/>
            <person name="Moens L."/>
            <person name="Monge C."/>
        </authorList>
    </citation>
    <scope>PROTEIN SEQUENCE</scope>
</reference>
<comment type="tissue specificity">
    <text>Red blood cells.</text>
</comment>
<comment type="similarity">
    <text evidence="1 2">Belongs to the globin family.</text>
</comment>
<feature type="chain" id="PRO_0000053128" description="Hemoglobin subunit beta-2">
    <location>
        <begin position="1"/>
        <end position="145"/>
    </location>
</feature>
<feature type="domain" description="Globin" evidence="2">
    <location>
        <begin position="2"/>
        <end position="145"/>
    </location>
</feature>
<feature type="binding site" description="distal binding residue" evidence="2">
    <location>
        <position position="63"/>
    </location>
    <ligand>
        <name>heme b</name>
        <dbReference type="ChEBI" id="CHEBI:60344"/>
    </ligand>
    <ligandPart>
        <name>Fe</name>
        <dbReference type="ChEBI" id="CHEBI:18248"/>
    </ligandPart>
</feature>
<feature type="binding site" description="proximal binding residue" evidence="2">
    <location>
        <position position="91"/>
    </location>
    <ligand>
        <name>heme b</name>
        <dbReference type="ChEBI" id="CHEBI:60344"/>
    </ligand>
    <ligandPart>
        <name>Fe</name>
        <dbReference type="ChEBI" id="CHEBI:18248"/>
    </ligandPart>
</feature>
<protein>
    <recommendedName>
        <fullName>Hemoglobin subunit beta-2</fullName>
    </recommendedName>
    <alternativeName>
        <fullName>Beta-2-globin</fullName>
    </alternativeName>
    <alternativeName>
        <fullName>Hemoglobin beta-2 chain</fullName>
    </alternativeName>
</protein>